<dbReference type="EC" id="2.1.1.192" evidence="1"/>
<dbReference type="EMBL" id="BA000021">
    <property type="protein sequence ID" value="BAC24717.1"/>
    <property type="molecule type" value="Genomic_DNA"/>
</dbReference>
<dbReference type="SMR" id="Q8D1Y5"/>
<dbReference type="STRING" id="36870.gene:10369080"/>
<dbReference type="KEGG" id="wbr:yfgB"/>
<dbReference type="eggNOG" id="COG0820">
    <property type="taxonomic scope" value="Bacteria"/>
</dbReference>
<dbReference type="HOGENOM" id="CLU_029101_0_0_6"/>
<dbReference type="Proteomes" id="UP000000562">
    <property type="component" value="Chromosome"/>
</dbReference>
<dbReference type="GO" id="GO:0005737">
    <property type="term" value="C:cytoplasm"/>
    <property type="evidence" value="ECO:0007669"/>
    <property type="project" value="UniProtKB-SubCell"/>
</dbReference>
<dbReference type="GO" id="GO:0051539">
    <property type="term" value="F:4 iron, 4 sulfur cluster binding"/>
    <property type="evidence" value="ECO:0007669"/>
    <property type="project" value="UniProtKB-UniRule"/>
</dbReference>
<dbReference type="GO" id="GO:0046872">
    <property type="term" value="F:metal ion binding"/>
    <property type="evidence" value="ECO:0007669"/>
    <property type="project" value="UniProtKB-KW"/>
</dbReference>
<dbReference type="GO" id="GO:0070040">
    <property type="term" value="F:rRNA (adenine(2503)-C2-)-methyltransferase activity"/>
    <property type="evidence" value="ECO:0007669"/>
    <property type="project" value="UniProtKB-UniRule"/>
</dbReference>
<dbReference type="GO" id="GO:0019843">
    <property type="term" value="F:rRNA binding"/>
    <property type="evidence" value="ECO:0007669"/>
    <property type="project" value="UniProtKB-UniRule"/>
</dbReference>
<dbReference type="GO" id="GO:0002935">
    <property type="term" value="F:tRNA (adenine(37)-C2)-methyltransferase activity"/>
    <property type="evidence" value="ECO:0007669"/>
    <property type="project" value="UniProtKB-UniRule"/>
</dbReference>
<dbReference type="GO" id="GO:0000049">
    <property type="term" value="F:tRNA binding"/>
    <property type="evidence" value="ECO:0007669"/>
    <property type="project" value="UniProtKB-UniRule"/>
</dbReference>
<dbReference type="GO" id="GO:0070475">
    <property type="term" value="P:rRNA base methylation"/>
    <property type="evidence" value="ECO:0007669"/>
    <property type="project" value="UniProtKB-UniRule"/>
</dbReference>
<dbReference type="GO" id="GO:0030488">
    <property type="term" value="P:tRNA methylation"/>
    <property type="evidence" value="ECO:0007669"/>
    <property type="project" value="UniProtKB-UniRule"/>
</dbReference>
<dbReference type="CDD" id="cd01335">
    <property type="entry name" value="Radical_SAM"/>
    <property type="match status" value="1"/>
</dbReference>
<dbReference type="FunFam" id="1.10.150.530:FF:000003">
    <property type="entry name" value="Dual-specificity RNA methyltransferase RlmN"/>
    <property type="match status" value="1"/>
</dbReference>
<dbReference type="FunFam" id="3.20.20.70:FF:000008">
    <property type="entry name" value="Dual-specificity RNA methyltransferase RlmN"/>
    <property type="match status" value="1"/>
</dbReference>
<dbReference type="Gene3D" id="1.10.150.530">
    <property type="match status" value="1"/>
</dbReference>
<dbReference type="Gene3D" id="3.20.20.70">
    <property type="entry name" value="Aldolase class I"/>
    <property type="match status" value="1"/>
</dbReference>
<dbReference type="HAMAP" id="MF_01849">
    <property type="entry name" value="RNA_methyltr_RlmN"/>
    <property type="match status" value="1"/>
</dbReference>
<dbReference type="InterPro" id="IPR013785">
    <property type="entry name" value="Aldolase_TIM"/>
</dbReference>
<dbReference type="InterPro" id="IPR040072">
    <property type="entry name" value="Methyltransferase_A"/>
</dbReference>
<dbReference type="InterPro" id="IPR048641">
    <property type="entry name" value="RlmN_N"/>
</dbReference>
<dbReference type="InterPro" id="IPR027492">
    <property type="entry name" value="RNA_MTrfase_RlmN"/>
</dbReference>
<dbReference type="InterPro" id="IPR004383">
    <property type="entry name" value="rRNA_lsu_MTrfase_RlmN/Cfr"/>
</dbReference>
<dbReference type="InterPro" id="IPR007197">
    <property type="entry name" value="rSAM"/>
</dbReference>
<dbReference type="NCBIfam" id="TIGR00048">
    <property type="entry name" value="rRNA_mod_RlmN"/>
    <property type="match status" value="1"/>
</dbReference>
<dbReference type="PANTHER" id="PTHR30544">
    <property type="entry name" value="23S RRNA METHYLTRANSFERASE"/>
    <property type="match status" value="1"/>
</dbReference>
<dbReference type="PANTHER" id="PTHR30544:SF5">
    <property type="entry name" value="RADICAL SAM CORE DOMAIN-CONTAINING PROTEIN"/>
    <property type="match status" value="1"/>
</dbReference>
<dbReference type="Pfam" id="PF04055">
    <property type="entry name" value="Radical_SAM"/>
    <property type="match status" value="1"/>
</dbReference>
<dbReference type="Pfam" id="PF21016">
    <property type="entry name" value="RlmN_N"/>
    <property type="match status" value="1"/>
</dbReference>
<dbReference type="PIRSF" id="PIRSF006004">
    <property type="entry name" value="CHP00048"/>
    <property type="match status" value="1"/>
</dbReference>
<dbReference type="SFLD" id="SFLDF00275">
    <property type="entry name" value="adenosine_C2_methyltransferase"/>
    <property type="match status" value="1"/>
</dbReference>
<dbReference type="SFLD" id="SFLDG01062">
    <property type="entry name" value="methyltransferase_(Class_A)"/>
    <property type="match status" value="1"/>
</dbReference>
<dbReference type="SUPFAM" id="SSF102114">
    <property type="entry name" value="Radical SAM enzymes"/>
    <property type="match status" value="1"/>
</dbReference>
<dbReference type="PROSITE" id="PS51918">
    <property type="entry name" value="RADICAL_SAM"/>
    <property type="match status" value="1"/>
</dbReference>
<feature type="chain" id="PRO_0000350522" description="Dual-specificity RNA methyltransferase RlmN">
    <location>
        <begin position="1"/>
        <end position="382"/>
    </location>
</feature>
<feature type="domain" description="Radical SAM core" evidence="2">
    <location>
        <begin position="119"/>
        <end position="358"/>
    </location>
</feature>
<feature type="active site" description="Proton acceptor" evidence="1">
    <location>
        <position position="113"/>
    </location>
</feature>
<feature type="active site" description="S-methylcysteine intermediate" evidence="1">
    <location>
        <position position="363"/>
    </location>
</feature>
<feature type="binding site" evidence="1">
    <location>
        <position position="133"/>
    </location>
    <ligand>
        <name>[4Fe-4S] cluster</name>
        <dbReference type="ChEBI" id="CHEBI:49883"/>
        <note>4Fe-4S-S-AdoMet</note>
    </ligand>
</feature>
<feature type="binding site" evidence="1">
    <location>
        <position position="137"/>
    </location>
    <ligand>
        <name>[4Fe-4S] cluster</name>
        <dbReference type="ChEBI" id="CHEBI:49883"/>
        <note>4Fe-4S-S-AdoMet</note>
    </ligand>
</feature>
<feature type="binding site" evidence="1">
    <location>
        <position position="140"/>
    </location>
    <ligand>
        <name>[4Fe-4S] cluster</name>
        <dbReference type="ChEBI" id="CHEBI:49883"/>
        <note>4Fe-4S-S-AdoMet</note>
    </ligand>
</feature>
<feature type="binding site" evidence="1">
    <location>
        <begin position="187"/>
        <end position="188"/>
    </location>
    <ligand>
        <name>S-adenosyl-L-methionine</name>
        <dbReference type="ChEBI" id="CHEBI:59789"/>
    </ligand>
</feature>
<feature type="binding site" evidence="1">
    <location>
        <position position="219"/>
    </location>
    <ligand>
        <name>S-adenosyl-L-methionine</name>
        <dbReference type="ChEBI" id="CHEBI:59789"/>
    </ligand>
</feature>
<feature type="binding site" evidence="1">
    <location>
        <begin position="241"/>
        <end position="243"/>
    </location>
    <ligand>
        <name>S-adenosyl-L-methionine</name>
        <dbReference type="ChEBI" id="CHEBI:59789"/>
    </ligand>
</feature>
<feature type="binding site" evidence="1">
    <location>
        <position position="320"/>
    </location>
    <ligand>
        <name>S-adenosyl-L-methionine</name>
        <dbReference type="ChEBI" id="CHEBI:59789"/>
    </ligand>
</feature>
<feature type="disulfide bond" description="(transient)" evidence="1">
    <location>
        <begin position="126"/>
        <end position="363"/>
    </location>
</feature>
<proteinExistence type="inferred from homology"/>
<reference key="1">
    <citation type="journal article" date="2002" name="Nat. Genet.">
        <title>Genome sequence of the endocellular obligate symbiont of tsetse flies, Wigglesworthia glossinidia.</title>
        <authorList>
            <person name="Akman L."/>
            <person name="Yamashita A."/>
            <person name="Watanabe H."/>
            <person name="Oshima K."/>
            <person name="Shiba T."/>
            <person name="Hattori M."/>
            <person name="Aksoy S."/>
        </authorList>
    </citation>
    <scope>NUCLEOTIDE SEQUENCE [LARGE SCALE GENOMIC DNA]</scope>
</reference>
<sequence>MCLPLILTIKIINIIINMFNKTNKKINILGKTREELYDFFIKIGEEKFRAEQIMKWIYKRYCDDVSLMTDFSKNLKNKLKNIIKIDHLDIESENISQDGTIKWVLKINDQNIETVYIPEINRATLCISSQIGCALNCKFCATSYQGFNRNLNSYEIISQIWYAMKIINDRNNFKLKKITNIVMMGMGEPLLNLKNLVPAIKIILDNYGFGLSKRRITISTAGISPVIKKLGKLIDVKLAISLHAPNDIIRNKIMPINKKYNIKSILLSAKKYISTSKANKGKISIEYIMLNEINDKTEHAYQLINCLKNIPCKINLIPWNPFPYVKYKCSNFNKINNFYKILIKHGITTTIRKQRGIDIKAACGQLSGNVINRINKRNIINF</sequence>
<evidence type="ECO:0000255" key="1">
    <source>
        <dbReference type="HAMAP-Rule" id="MF_01849"/>
    </source>
</evidence>
<evidence type="ECO:0000255" key="2">
    <source>
        <dbReference type="PROSITE-ProRule" id="PRU01266"/>
    </source>
</evidence>
<name>RLMN_WIGBR</name>
<organism>
    <name type="scientific">Wigglesworthia glossinidia brevipalpis</name>
    <dbReference type="NCBI Taxonomy" id="36870"/>
    <lineage>
        <taxon>Bacteria</taxon>
        <taxon>Pseudomonadati</taxon>
        <taxon>Pseudomonadota</taxon>
        <taxon>Gammaproteobacteria</taxon>
        <taxon>Enterobacterales</taxon>
        <taxon>Erwiniaceae</taxon>
        <taxon>Wigglesworthia</taxon>
    </lineage>
</organism>
<keyword id="KW-0004">4Fe-4S</keyword>
<keyword id="KW-0963">Cytoplasm</keyword>
<keyword id="KW-1015">Disulfide bond</keyword>
<keyword id="KW-0408">Iron</keyword>
<keyword id="KW-0411">Iron-sulfur</keyword>
<keyword id="KW-0479">Metal-binding</keyword>
<keyword id="KW-0489">Methyltransferase</keyword>
<keyword id="KW-1185">Reference proteome</keyword>
<keyword id="KW-0698">rRNA processing</keyword>
<keyword id="KW-0949">S-adenosyl-L-methionine</keyword>
<keyword id="KW-0808">Transferase</keyword>
<keyword id="KW-0819">tRNA processing</keyword>
<gene>
    <name evidence="1" type="primary">rlmN</name>
    <name type="ordered locus">WIGBR5710</name>
</gene>
<protein>
    <recommendedName>
        <fullName evidence="1">Dual-specificity RNA methyltransferase RlmN</fullName>
        <ecNumber evidence="1">2.1.1.192</ecNumber>
    </recommendedName>
    <alternativeName>
        <fullName evidence="1">23S rRNA (adenine(2503)-C(2))-methyltransferase</fullName>
    </alternativeName>
    <alternativeName>
        <fullName evidence="1">23S rRNA m2A2503 methyltransferase</fullName>
    </alternativeName>
    <alternativeName>
        <fullName evidence="1">Ribosomal RNA large subunit methyltransferase N</fullName>
    </alternativeName>
    <alternativeName>
        <fullName evidence="1">tRNA (adenine(37)-C(2))-methyltransferase</fullName>
    </alternativeName>
    <alternativeName>
        <fullName evidence="1">tRNA m2A37 methyltransferase</fullName>
    </alternativeName>
</protein>
<accession>Q8D1Y5</accession>
<comment type="function">
    <text evidence="1">Specifically methylates position 2 of adenine 2503 in 23S rRNA and position 2 of adenine 37 in tRNAs. m2A2503 modification seems to play a crucial role in the proofreading step occurring at the peptidyl transferase center and thus would serve to optimize ribosomal fidelity.</text>
</comment>
<comment type="catalytic activity">
    <reaction evidence="1">
        <text>adenosine(2503) in 23S rRNA + 2 reduced [2Fe-2S]-[ferredoxin] + 2 S-adenosyl-L-methionine = 2-methyladenosine(2503) in 23S rRNA + 5'-deoxyadenosine + L-methionine + 2 oxidized [2Fe-2S]-[ferredoxin] + S-adenosyl-L-homocysteine</text>
        <dbReference type="Rhea" id="RHEA:42916"/>
        <dbReference type="Rhea" id="RHEA-COMP:10000"/>
        <dbReference type="Rhea" id="RHEA-COMP:10001"/>
        <dbReference type="Rhea" id="RHEA-COMP:10152"/>
        <dbReference type="Rhea" id="RHEA-COMP:10282"/>
        <dbReference type="ChEBI" id="CHEBI:17319"/>
        <dbReference type="ChEBI" id="CHEBI:33737"/>
        <dbReference type="ChEBI" id="CHEBI:33738"/>
        <dbReference type="ChEBI" id="CHEBI:57844"/>
        <dbReference type="ChEBI" id="CHEBI:57856"/>
        <dbReference type="ChEBI" id="CHEBI:59789"/>
        <dbReference type="ChEBI" id="CHEBI:74411"/>
        <dbReference type="ChEBI" id="CHEBI:74497"/>
        <dbReference type="EC" id="2.1.1.192"/>
    </reaction>
</comment>
<comment type="catalytic activity">
    <reaction evidence="1">
        <text>adenosine(37) in tRNA + 2 reduced [2Fe-2S]-[ferredoxin] + 2 S-adenosyl-L-methionine = 2-methyladenosine(37) in tRNA + 5'-deoxyadenosine + L-methionine + 2 oxidized [2Fe-2S]-[ferredoxin] + S-adenosyl-L-homocysteine</text>
        <dbReference type="Rhea" id="RHEA:43332"/>
        <dbReference type="Rhea" id="RHEA-COMP:10000"/>
        <dbReference type="Rhea" id="RHEA-COMP:10001"/>
        <dbReference type="Rhea" id="RHEA-COMP:10162"/>
        <dbReference type="Rhea" id="RHEA-COMP:10485"/>
        <dbReference type="ChEBI" id="CHEBI:17319"/>
        <dbReference type="ChEBI" id="CHEBI:33737"/>
        <dbReference type="ChEBI" id="CHEBI:33738"/>
        <dbReference type="ChEBI" id="CHEBI:57844"/>
        <dbReference type="ChEBI" id="CHEBI:57856"/>
        <dbReference type="ChEBI" id="CHEBI:59789"/>
        <dbReference type="ChEBI" id="CHEBI:74411"/>
        <dbReference type="ChEBI" id="CHEBI:74497"/>
        <dbReference type="EC" id="2.1.1.192"/>
    </reaction>
</comment>
<comment type="cofactor">
    <cofactor evidence="1">
        <name>[4Fe-4S] cluster</name>
        <dbReference type="ChEBI" id="CHEBI:49883"/>
    </cofactor>
    <text evidence="1">Binds 1 [4Fe-4S] cluster. The cluster is coordinated with 3 cysteines and an exchangeable S-adenosyl-L-methionine.</text>
</comment>
<comment type="subcellular location">
    <subcellularLocation>
        <location evidence="1">Cytoplasm</location>
    </subcellularLocation>
</comment>
<comment type="miscellaneous">
    <text evidence="1">Reaction proceeds by a ping-pong mechanism involving intermediate methylation of a conserved cysteine residue.</text>
</comment>
<comment type="similarity">
    <text evidence="1">Belongs to the radical SAM superfamily. RlmN family.</text>
</comment>